<reference key="1">
    <citation type="journal article" date="2003" name="Proc. Natl. Acad. Sci. U.S.A.">
        <title>Complete genome sequence of the marine planctomycete Pirellula sp. strain 1.</title>
        <authorList>
            <person name="Gloeckner F.O."/>
            <person name="Kube M."/>
            <person name="Bauer M."/>
            <person name="Teeling H."/>
            <person name="Lombardot T."/>
            <person name="Ludwig W."/>
            <person name="Gade D."/>
            <person name="Beck A."/>
            <person name="Borzym K."/>
            <person name="Heitmann K."/>
            <person name="Rabus R."/>
            <person name="Schlesner H."/>
            <person name="Amann R."/>
            <person name="Reinhardt R."/>
        </authorList>
    </citation>
    <scope>NUCLEOTIDE SEQUENCE [LARGE SCALE GENOMIC DNA]</scope>
    <source>
        <strain>DSM 10527 / NCIMB 13988 / SH1</strain>
    </source>
</reference>
<dbReference type="EC" id="6.5.1.2" evidence="1"/>
<dbReference type="EMBL" id="BX294152">
    <property type="protein sequence ID" value="CAD76950.1"/>
    <property type="molecule type" value="Genomic_DNA"/>
</dbReference>
<dbReference type="RefSeq" id="NP_869572.1">
    <property type="nucleotide sequence ID" value="NC_005027.1"/>
</dbReference>
<dbReference type="RefSeq" id="WP_011122894.1">
    <property type="nucleotide sequence ID" value="NC_005027.1"/>
</dbReference>
<dbReference type="SMR" id="Q7UKD1"/>
<dbReference type="FunCoup" id="Q7UKD1">
    <property type="interactions" value="382"/>
</dbReference>
<dbReference type="STRING" id="243090.RB10711"/>
<dbReference type="EnsemblBacteria" id="CAD76950">
    <property type="protein sequence ID" value="CAD76950"/>
    <property type="gene ID" value="RB10711"/>
</dbReference>
<dbReference type="KEGG" id="rba:RB10711"/>
<dbReference type="PATRIC" id="fig|243090.15.peg.5171"/>
<dbReference type="eggNOG" id="COG0272">
    <property type="taxonomic scope" value="Bacteria"/>
</dbReference>
<dbReference type="HOGENOM" id="CLU_007764_2_1_0"/>
<dbReference type="InParanoid" id="Q7UKD1"/>
<dbReference type="OrthoDB" id="9759736at2"/>
<dbReference type="Proteomes" id="UP000001025">
    <property type="component" value="Chromosome"/>
</dbReference>
<dbReference type="GO" id="GO:0005829">
    <property type="term" value="C:cytosol"/>
    <property type="evidence" value="ECO:0000318"/>
    <property type="project" value="GO_Central"/>
</dbReference>
<dbReference type="GO" id="GO:0003911">
    <property type="term" value="F:DNA ligase (NAD+) activity"/>
    <property type="evidence" value="ECO:0000318"/>
    <property type="project" value="GO_Central"/>
</dbReference>
<dbReference type="GO" id="GO:0046872">
    <property type="term" value="F:metal ion binding"/>
    <property type="evidence" value="ECO:0007669"/>
    <property type="project" value="UniProtKB-KW"/>
</dbReference>
<dbReference type="GO" id="GO:0006281">
    <property type="term" value="P:DNA repair"/>
    <property type="evidence" value="ECO:0007669"/>
    <property type="project" value="UniProtKB-KW"/>
</dbReference>
<dbReference type="GO" id="GO:0006260">
    <property type="term" value="P:DNA replication"/>
    <property type="evidence" value="ECO:0007669"/>
    <property type="project" value="UniProtKB-KW"/>
</dbReference>
<dbReference type="CDD" id="cd17748">
    <property type="entry name" value="BRCT_DNA_ligase_like"/>
    <property type="match status" value="1"/>
</dbReference>
<dbReference type="CDD" id="cd00114">
    <property type="entry name" value="LIGANc"/>
    <property type="match status" value="1"/>
</dbReference>
<dbReference type="FunFam" id="2.40.50.140:FF:000012">
    <property type="entry name" value="DNA ligase"/>
    <property type="match status" value="1"/>
</dbReference>
<dbReference type="FunFam" id="3.40.50.10190:FF:000054">
    <property type="entry name" value="DNA ligase"/>
    <property type="match status" value="1"/>
</dbReference>
<dbReference type="Gene3D" id="6.20.10.30">
    <property type="match status" value="1"/>
</dbReference>
<dbReference type="Gene3D" id="1.10.150.20">
    <property type="entry name" value="5' to 3' exonuclease, C-terminal subdomain"/>
    <property type="match status" value="2"/>
</dbReference>
<dbReference type="Gene3D" id="3.40.50.10190">
    <property type="entry name" value="BRCT domain"/>
    <property type="match status" value="1"/>
</dbReference>
<dbReference type="Gene3D" id="3.30.470.30">
    <property type="entry name" value="DNA ligase/mRNA capping enzyme"/>
    <property type="match status" value="1"/>
</dbReference>
<dbReference type="Gene3D" id="1.10.287.610">
    <property type="entry name" value="Helix hairpin bin"/>
    <property type="match status" value="1"/>
</dbReference>
<dbReference type="Gene3D" id="2.40.50.140">
    <property type="entry name" value="Nucleic acid-binding proteins"/>
    <property type="match status" value="1"/>
</dbReference>
<dbReference type="HAMAP" id="MF_01588">
    <property type="entry name" value="DNA_ligase_A"/>
    <property type="match status" value="1"/>
</dbReference>
<dbReference type="InterPro" id="IPR001357">
    <property type="entry name" value="BRCT_dom"/>
</dbReference>
<dbReference type="InterPro" id="IPR036420">
    <property type="entry name" value="BRCT_dom_sf"/>
</dbReference>
<dbReference type="InterPro" id="IPR041663">
    <property type="entry name" value="DisA/LigA_HHH"/>
</dbReference>
<dbReference type="InterPro" id="IPR001679">
    <property type="entry name" value="DNA_ligase"/>
</dbReference>
<dbReference type="InterPro" id="IPR018239">
    <property type="entry name" value="DNA_ligase_AS"/>
</dbReference>
<dbReference type="InterPro" id="IPR033136">
    <property type="entry name" value="DNA_ligase_CS"/>
</dbReference>
<dbReference type="InterPro" id="IPR013839">
    <property type="entry name" value="DNAligase_adenylation"/>
</dbReference>
<dbReference type="InterPro" id="IPR013840">
    <property type="entry name" value="DNAligase_N"/>
</dbReference>
<dbReference type="InterPro" id="IPR012340">
    <property type="entry name" value="NA-bd_OB-fold"/>
</dbReference>
<dbReference type="InterPro" id="IPR004150">
    <property type="entry name" value="NAD_DNA_ligase_OB"/>
</dbReference>
<dbReference type="InterPro" id="IPR010994">
    <property type="entry name" value="RuvA_2-like"/>
</dbReference>
<dbReference type="InterPro" id="IPR004149">
    <property type="entry name" value="Znf_DNAligase_C4"/>
</dbReference>
<dbReference type="NCBIfam" id="TIGR00575">
    <property type="entry name" value="dnlj"/>
    <property type="match status" value="1"/>
</dbReference>
<dbReference type="NCBIfam" id="NF005932">
    <property type="entry name" value="PRK07956.1"/>
    <property type="match status" value="1"/>
</dbReference>
<dbReference type="PANTHER" id="PTHR23389">
    <property type="entry name" value="CHROMOSOME TRANSMISSION FIDELITY FACTOR 18"/>
    <property type="match status" value="1"/>
</dbReference>
<dbReference type="PANTHER" id="PTHR23389:SF9">
    <property type="entry name" value="DNA LIGASE"/>
    <property type="match status" value="1"/>
</dbReference>
<dbReference type="Pfam" id="PF00533">
    <property type="entry name" value="BRCT"/>
    <property type="match status" value="1"/>
</dbReference>
<dbReference type="Pfam" id="PF01653">
    <property type="entry name" value="DNA_ligase_aden"/>
    <property type="match status" value="1"/>
</dbReference>
<dbReference type="Pfam" id="PF03120">
    <property type="entry name" value="DNA_ligase_OB"/>
    <property type="match status" value="1"/>
</dbReference>
<dbReference type="Pfam" id="PF03119">
    <property type="entry name" value="DNA_ligase_ZBD"/>
    <property type="match status" value="1"/>
</dbReference>
<dbReference type="Pfam" id="PF12826">
    <property type="entry name" value="HHH_2"/>
    <property type="match status" value="1"/>
</dbReference>
<dbReference type="PIRSF" id="PIRSF001604">
    <property type="entry name" value="LigA"/>
    <property type="match status" value="1"/>
</dbReference>
<dbReference type="SMART" id="SM00292">
    <property type="entry name" value="BRCT"/>
    <property type="match status" value="1"/>
</dbReference>
<dbReference type="SMART" id="SM00532">
    <property type="entry name" value="LIGANc"/>
    <property type="match status" value="1"/>
</dbReference>
<dbReference type="SUPFAM" id="SSF52113">
    <property type="entry name" value="BRCT domain"/>
    <property type="match status" value="1"/>
</dbReference>
<dbReference type="SUPFAM" id="SSF56091">
    <property type="entry name" value="DNA ligase/mRNA capping enzyme, catalytic domain"/>
    <property type="match status" value="1"/>
</dbReference>
<dbReference type="SUPFAM" id="SSF50249">
    <property type="entry name" value="Nucleic acid-binding proteins"/>
    <property type="match status" value="1"/>
</dbReference>
<dbReference type="SUPFAM" id="SSF47781">
    <property type="entry name" value="RuvA domain 2-like"/>
    <property type="match status" value="1"/>
</dbReference>
<dbReference type="PROSITE" id="PS50172">
    <property type="entry name" value="BRCT"/>
    <property type="match status" value="1"/>
</dbReference>
<dbReference type="PROSITE" id="PS01055">
    <property type="entry name" value="DNA_LIGASE_N1"/>
    <property type="match status" value="1"/>
</dbReference>
<dbReference type="PROSITE" id="PS01056">
    <property type="entry name" value="DNA_LIGASE_N2"/>
    <property type="match status" value="1"/>
</dbReference>
<sequence>MPQDRFVASDSIASRVQQLVDEINRHNRLYYDDAAPEITDLQYDQLLAELTQLENDHPDLRRPDSPTQLVGGDVVDQLVQVPHRVPMLSIDNTYSREELAAAMERIEKSLEGESVAWTMEYKIDGVAGSIRYENGELTLALTRGNGQVGDDITHNVRTIRELPRSIADAALAHPEVAGGNVPEVLEVRGELYMTDADLADLNVRQTDAGHEPFKNTRNVTAGTIRLLDPKIAASRNIRFFCHGSGELVGVRASDHMTFLQHVQALGIPIAPDVVRFENKEDALQAIAKLELEMPDLPFEIDGIVFKVDSFEQREKLGVRSKSPRWVIAYKFERYEAITTLEAIDVQVGKTGTITPVAYLTPVDIADTTVSRASLHNADEIERLDVRVGDTVVVEKAGKIIPKVVRVEKHARTKPLPKFEFPTHCPQCDEVLTRDEGGVYIRCTNPACPAQLRQRLVYFGSRTGMDIDGLGEEVVDLLLQKELVENYADLYRLNVDELAELTWPRLRKGKGDEMIEVQFGRKNAESLVAGINESRTRGLARVLSSISIRHIGPRVAKLITAKFWNLDLLRSAKAEDLAAIHEIGDRIAESLVKFIHSESGSQTLSDLDAVGVTMSETEPVATPDEEANLPLAGKNIVATGTLQHYTRDEIKARIEELGGRAASSVSKKTDFLIAGEKAGSKLTKAESLGVEVLSEDDFRLRYETEAT</sequence>
<evidence type="ECO:0000255" key="1">
    <source>
        <dbReference type="HAMAP-Rule" id="MF_01588"/>
    </source>
</evidence>
<keyword id="KW-0227">DNA damage</keyword>
<keyword id="KW-0234">DNA repair</keyword>
<keyword id="KW-0235">DNA replication</keyword>
<keyword id="KW-0436">Ligase</keyword>
<keyword id="KW-0460">Magnesium</keyword>
<keyword id="KW-0464">Manganese</keyword>
<keyword id="KW-0479">Metal-binding</keyword>
<keyword id="KW-0520">NAD</keyword>
<keyword id="KW-1185">Reference proteome</keyword>
<keyword id="KW-0862">Zinc</keyword>
<protein>
    <recommendedName>
        <fullName evidence="1">DNA ligase</fullName>
        <ecNumber evidence="1">6.5.1.2</ecNumber>
    </recommendedName>
    <alternativeName>
        <fullName evidence="1">Polydeoxyribonucleotide synthase [NAD(+)]</fullName>
    </alternativeName>
</protein>
<comment type="function">
    <text evidence="1">DNA ligase that catalyzes the formation of phosphodiester linkages between 5'-phosphoryl and 3'-hydroxyl groups in double-stranded DNA using NAD as a coenzyme and as the energy source for the reaction. It is essential for DNA replication and repair of damaged DNA.</text>
</comment>
<comment type="catalytic activity">
    <reaction evidence="1">
        <text>NAD(+) + (deoxyribonucleotide)n-3'-hydroxyl + 5'-phospho-(deoxyribonucleotide)m = (deoxyribonucleotide)n+m + AMP + beta-nicotinamide D-nucleotide.</text>
        <dbReference type="EC" id="6.5.1.2"/>
    </reaction>
</comment>
<comment type="cofactor">
    <cofactor evidence="1">
        <name>Mg(2+)</name>
        <dbReference type="ChEBI" id="CHEBI:18420"/>
    </cofactor>
    <cofactor evidence="1">
        <name>Mn(2+)</name>
        <dbReference type="ChEBI" id="CHEBI:29035"/>
    </cofactor>
</comment>
<comment type="similarity">
    <text evidence="1">Belongs to the NAD-dependent DNA ligase family. LigA subfamily.</text>
</comment>
<name>DNLJ_RHOBA</name>
<feature type="chain" id="PRO_0000313399" description="DNA ligase">
    <location>
        <begin position="1"/>
        <end position="706"/>
    </location>
</feature>
<feature type="domain" description="BRCT" evidence="1">
    <location>
        <begin position="625"/>
        <end position="706"/>
    </location>
</feature>
<feature type="active site" description="N6-AMP-lysine intermediate" evidence="1">
    <location>
        <position position="122"/>
    </location>
</feature>
<feature type="binding site" evidence="1">
    <location>
        <begin position="40"/>
        <end position="44"/>
    </location>
    <ligand>
        <name>NAD(+)</name>
        <dbReference type="ChEBI" id="CHEBI:57540"/>
    </ligand>
</feature>
<feature type="binding site" evidence="1">
    <location>
        <begin position="89"/>
        <end position="90"/>
    </location>
    <ligand>
        <name>NAD(+)</name>
        <dbReference type="ChEBI" id="CHEBI:57540"/>
    </ligand>
</feature>
<feature type="binding site" evidence="1">
    <location>
        <position position="120"/>
    </location>
    <ligand>
        <name>NAD(+)</name>
        <dbReference type="ChEBI" id="CHEBI:57540"/>
    </ligand>
</feature>
<feature type="binding site" evidence="1">
    <location>
        <position position="143"/>
    </location>
    <ligand>
        <name>NAD(+)</name>
        <dbReference type="ChEBI" id="CHEBI:57540"/>
    </ligand>
</feature>
<feature type="binding site" evidence="1">
    <location>
        <position position="190"/>
    </location>
    <ligand>
        <name>NAD(+)</name>
        <dbReference type="ChEBI" id="CHEBI:57540"/>
    </ligand>
</feature>
<feature type="binding site" evidence="1">
    <location>
        <position position="306"/>
    </location>
    <ligand>
        <name>NAD(+)</name>
        <dbReference type="ChEBI" id="CHEBI:57540"/>
    </ligand>
</feature>
<feature type="binding site" evidence="1">
    <location>
        <position position="330"/>
    </location>
    <ligand>
        <name>NAD(+)</name>
        <dbReference type="ChEBI" id="CHEBI:57540"/>
    </ligand>
</feature>
<feature type="binding site" evidence="1">
    <location>
        <position position="424"/>
    </location>
    <ligand>
        <name>Zn(2+)</name>
        <dbReference type="ChEBI" id="CHEBI:29105"/>
    </ligand>
</feature>
<feature type="binding site" evidence="1">
    <location>
        <position position="427"/>
    </location>
    <ligand>
        <name>Zn(2+)</name>
        <dbReference type="ChEBI" id="CHEBI:29105"/>
    </ligand>
</feature>
<feature type="binding site" evidence="1">
    <location>
        <position position="442"/>
    </location>
    <ligand>
        <name>Zn(2+)</name>
        <dbReference type="ChEBI" id="CHEBI:29105"/>
    </ligand>
</feature>
<feature type="binding site" evidence="1">
    <location>
        <position position="447"/>
    </location>
    <ligand>
        <name>Zn(2+)</name>
        <dbReference type="ChEBI" id="CHEBI:29105"/>
    </ligand>
</feature>
<gene>
    <name evidence="1" type="primary">ligA</name>
    <name type="ordered locus">RB10711</name>
</gene>
<accession>Q7UKD1</accession>
<organism>
    <name type="scientific">Rhodopirellula baltica (strain DSM 10527 / NCIMB 13988 / SH1)</name>
    <dbReference type="NCBI Taxonomy" id="243090"/>
    <lineage>
        <taxon>Bacteria</taxon>
        <taxon>Pseudomonadati</taxon>
        <taxon>Planctomycetota</taxon>
        <taxon>Planctomycetia</taxon>
        <taxon>Pirellulales</taxon>
        <taxon>Pirellulaceae</taxon>
        <taxon>Rhodopirellula</taxon>
    </lineage>
</organism>
<proteinExistence type="inferred from homology"/>